<comment type="function">
    <text>Ferredoxin are iron-sulfur proteins that transfer electrons in a wide variety of metabolic reactions.</text>
</comment>
<comment type="cofactor">
    <cofactor evidence="1">
        <name>[2Fe-2S] cluster</name>
        <dbReference type="ChEBI" id="CHEBI:190135"/>
    </cofactor>
    <text evidence="1">Binds 1 [2Fe-2S] cluster.</text>
</comment>
<comment type="similarity">
    <text evidence="3">Belongs to the adrenodoxin/putidaredoxin family.</text>
</comment>
<gene>
    <name type="primary">fdxB</name>
    <name type="ordered locus">RC0261</name>
</gene>
<evidence type="ECO:0000250" key="1"/>
<evidence type="ECO:0000255" key="2">
    <source>
        <dbReference type="PROSITE-ProRule" id="PRU00465"/>
    </source>
</evidence>
<evidence type="ECO:0000305" key="3"/>
<accession>Q92J08</accession>
<feature type="chain" id="PRO_0000201174" description="2Fe-2S ferredoxin">
    <location>
        <begin position="1"/>
        <end position="112"/>
    </location>
</feature>
<feature type="domain" description="2Fe-2S ferredoxin-type" evidence="2">
    <location>
        <begin position="5"/>
        <end position="107"/>
    </location>
</feature>
<feature type="binding site" evidence="2">
    <location>
        <position position="42"/>
    </location>
    <ligand>
        <name>[2Fe-2S] cluster</name>
        <dbReference type="ChEBI" id="CHEBI:190135"/>
    </ligand>
</feature>
<feature type="binding site" evidence="2">
    <location>
        <position position="48"/>
    </location>
    <ligand>
        <name>[2Fe-2S] cluster</name>
        <dbReference type="ChEBI" id="CHEBI:190135"/>
    </ligand>
</feature>
<feature type="binding site" evidence="2">
    <location>
        <position position="51"/>
    </location>
    <ligand>
        <name>[2Fe-2S] cluster</name>
        <dbReference type="ChEBI" id="CHEBI:190135"/>
    </ligand>
</feature>
<feature type="binding site" evidence="2">
    <location>
        <position position="88"/>
    </location>
    <ligand>
        <name>[2Fe-2S] cluster</name>
        <dbReference type="ChEBI" id="CHEBI:190135"/>
    </ligand>
</feature>
<sequence length="112" mass="12264">MSGKIKVTFIINDGEEKTVEAPIGLSILEIAHSNDLDLEGACEGSLACATCHVILEEEFYNKLKKPTEAEEDMLDLAFGLTDTSRLGCQIILTEELDGIKVRIPATTRNIKL</sequence>
<dbReference type="EMBL" id="AE006914">
    <property type="protein sequence ID" value="AAL02799.1"/>
    <property type="molecule type" value="Genomic_DNA"/>
</dbReference>
<dbReference type="PIR" id="E97732">
    <property type="entry name" value="E97732"/>
</dbReference>
<dbReference type="RefSeq" id="WP_010976922.1">
    <property type="nucleotide sequence ID" value="NC_003103.1"/>
</dbReference>
<dbReference type="SMR" id="Q92J08"/>
<dbReference type="GeneID" id="927917"/>
<dbReference type="KEGG" id="rco:RC0261"/>
<dbReference type="PATRIC" id="fig|272944.4.peg.299"/>
<dbReference type="HOGENOM" id="CLU_082632_5_0_5"/>
<dbReference type="Proteomes" id="UP000000816">
    <property type="component" value="Chromosome"/>
</dbReference>
<dbReference type="GO" id="GO:0051537">
    <property type="term" value="F:2 iron, 2 sulfur cluster binding"/>
    <property type="evidence" value="ECO:0007669"/>
    <property type="project" value="UniProtKB-KW"/>
</dbReference>
<dbReference type="GO" id="GO:0009055">
    <property type="term" value="F:electron transfer activity"/>
    <property type="evidence" value="ECO:0007669"/>
    <property type="project" value="TreeGrafter"/>
</dbReference>
<dbReference type="GO" id="GO:0046872">
    <property type="term" value="F:metal ion binding"/>
    <property type="evidence" value="ECO:0007669"/>
    <property type="project" value="UniProtKB-KW"/>
</dbReference>
<dbReference type="GO" id="GO:0140647">
    <property type="term" value="P:P450-containing electron transport chain"/>
    <property type="evidence" value="ECO:0007669"/>
    <property type="project" value="InterPro"/>
</dbReference>
<dbReference type="CDD" id="cd00207">
    <property type="entry name" value="fer2"/>
    <property type="match status" value="1"/>
</dbReference>
<dbReference type="Gene3D" id="3.10.20.30">
    <property type="match status" value="1"/>
</dbReference>
<dbReference type="InterPro" id="IPR036010">
    <property type="entry name" value="2Fe-2S_ferredoxin-like_sf"/>
</dbReference>
<dbReference type="InterPro" id="IPR001041">
    <property type="entry name" value="2Fe-2S_ferredoxin-type"/>
</dbReference>
<dbReference type="InterPro" id="IPR001055">
    <property type="entry name" value="Adrenodoxin-like"/>
</dbReference>
<dbReference type="InterPro" id="IPR018298">
    <property type="entry name" value="Adrenodoxin_Fe-S_BS"/>
</dbReference>
<dbReference type="InterPro" id="IPR012675">
    <property type="entry name" value="Beta-grasp_dom_sf"/>
</dbReference>
<dbReference type="PANTHER" id="PTHR23426:SF72">
    <property type="entry name" value="2FE-2S FERREDOXIN-TYPE DOMAIN-CONTAINING PROTEIN"/>
    <property type="match status" value="1"/>
</dbReference>
<dbReference type="PANTHER" id="PTHR23426">
    <property type="entry name" value="FERREDOXIN/ADRENODOXIN"/>
    <property type="match status" value="1"/>
</dbReference>
<dbReference type="Pfam" id="PF00111">
    <property type="entry name" value="Fer2"/>
    <property type="match status" value="1"/>
</dbReference>
<dbReference type="PRINTS" id="PR00355">
    <property type="entry name" value="ADRENODOXIN"/>
</dbReference>
<dbReference type="SUPFAM" id="SSF54292">
    <property type="entry name" value="2Fe-2S ferredoxin-like"/>
    <property type="match status" value="1"/>
</dbReference>
<dbReference type="PROSITE" id="PS51085">
    <property type="entry name" value="2FE2S_FER_2"/>
    <property type="match status" value="1"/>
</dbReference>
<dbReference type="PROSITE" id="PS00814">
    <property type="entry name" value="ADX"/>
    <property type="match status" value="1"/>
</dbReference>
<reference key="1">
    <citation type="journal article" date="2001" name="Science">
        <title>Mechanisms of evolution in Rickettsia conorii and R. prowazekii.</title>
        <authorList>
            <person name="Ogata H."/>
            <person name="Audic S."/>
            <person name="Renesto-Audiffren P."/>
            <person name="Fournier P.-E."/>
            <person name="Barbe V."/>
            <person name="Samson D."/>
            <person name="Roux V."/>
            <person name="Cossart P."/>
            <person name="Weissenbach J."/>
            <person name="Claverie J.-M."/>
            <person name="Raoult D."/>
        </authorList>
    </citation>
    <scope>NUCLEOTIDE SEQUENCE [LARGE SCALE GENOMIC DNA]</scope>
    <source>
        <strain>ATCC VR-613 / Malish 7</strain>
    </source>
</reference>
<keyword id="KW-0001">2Fe-2S</keyword>
<keyword id="KW-0249">Electron transport</keyword>
<keyword id="KW-0408">Iron</keyword>
<keyword id="KW-0411">Iron-sulfur</keyword>
<keyword id="KW-0479">Metal-binding</keyword>
<keyword id="KW-0813">Transport</keyword>
<protein>
    <recommendedName>
        <fullName>2Fe-2S ferredoxin</fullName>
    </recommendedName>
    <alternativeName>
        <fullName>Adrenodoxin-like protein</fullName>
    </alternativeName>
</protein>
<proteinExistence type="inferred from homology"/>
<organism>
    <name type="scientific">Rickettsia conorii (strain ATCC VR-613 / Malish 7)</name>
    <dbReference type="NCBI Taxonomy" id="272944"/>
    <lineage>
        <taxon>Bacteria</taxon>
        <taxon>Pseudomonadati</taxon>
        <taxon>Pseudomonadota</taxon>
        <taxon>Alphaproteobacteria</taxon>
        <taxon>Rickettsiales</taxon>
        <taxon>Rickettsiaceae</taxon>
        <taxon>Rickettsieae</taxon>
        <taxon>Rickettsia</taxon>
        <taxon>spotted fever group</taxon>
    </lineage>
</organism>
<name>FER2_RICCN</name>